<accession>A5IRC9</accession>
<protein>
    <recommendedName>
        <fullName>Na(+)/H(+) antiporter subunit B1</fullName>
    </recommendedName>
    <alternativeName>
        <fullName>Mnh complex subunit B1</fullName>
    </alternativeName>
</protein>
<organism>
    <name type="scientific">Staphylococcus aureus (strain JH9)</name>
    <dbReference type="NCBI Taxonomy" id="359786"/>
    <lineage>
        <taxon>Bacteria</taxon>
        <taxon>Bacillati</taxon>
        <taxon>Bacillota</taxon>
        <taxon>Bacilli</taxon>
        <taxon>Bacillales</taxon>
        <taxon>Staphylococcaceae</taxon>
        <taxon>Staphylococcus</taxon>
    </lineage>
</organism>
<feature type="chain" id="PRO_0000372107" description="Na(+)/H(+) antiporter subunit B1">
    <location>
        <begin position="1"/>
        <end position="142"/>
    </location>
</feature>
<feature type="transmembrane region" description="Helical" evidence="2">
    <location>
        <begin position="12"/>
        <end position="32"/>
    </location>
</feature>
<feature type="transmembrane region" description="Helical" evidence="2">
    <location>
        <begin position="37"/>
        <end position="57"/>
    </location>
</feature>
<feature type="transmembrane region" description="Helical" evidence="2">
    <location>
        <begin position="72"/>
        <end position="92"/>
    </location>
</feature>
<feature type="transmembrane region" description="Helical" evidence="2">
    <location>
        <begin position="116"/>
        <end position="136"/>
    </location>
</feature>
<gene>
    <name type="primary">mnhB1</name>
    <name type="ordered locus">SaurJH9_0951</name>
</gene>
<proteinExistence type="inferred from homology"/>
<comment type="function">
    <text evidence="1">Mnh complex is a Na(+)/H(+) antiporter involved in Na(+) excretion.</text>
</comment>
<comment type="subunit">
    <text evidence="1">May form a heterooligomeric complex that consists of seven subunits: mnhA1, mnhB1, mnhC1, mnhD1, mnhE1, mnhF1 and mnhG1.</text>
</comment>
<comment type="subcellular location">
    <subcellularLocation>
        <location evidence="3">Cell membrane</location>
        <topology evidence="3">Multi-pass membrane protein</topology>
    </subcellularLocation>
</comment>
<comment type="similarity">
    <text evidence="3">Belongs to the CPA3 antiporters (TC 2.A.63) subunit B family.</text>
</comment>
<dbReference type="EMBL" id="CP000703">
    <property type="protein sequence ID" value="ABQ48752.1"/>
    <property type="molecule type" value="Genomic_DNA"/>
</dbReference>
<dbReference type="RefSeq" id="WP_001081626.1">
    <property type="nucleotide sequence ID" value="NC_009487.1"/>
</dbReference>
<dbReference type="SMR" id="A5IRC9"/>
<dbReference type="GeneID" id="66839149"/>
<dbReference type="KEGG" id="saj:SaurJH9_0951"/>
<dbReference type="HOGENOM" id="CLU_101659_1_1_9"/>
<dbReference type="GO" id="GO:0005886">
    <property type="term" value="C:plasma membrane"/>
    <property type="evidence" value="ECO:0007669"/>
    <property type="project" value="UniProtKB-SubCell"/>
</dbReference>
<dbReference type="GO" id="GO:0015297">
    <property type="term" value="F:antiporter activity"/>
    <property type="evidence" value="ECO:0007669"/>
    <property type="project" value="UniProtKB-KW"/>
</dbReference>
<dbReference type="GO" id="GO:0008324">
    <property type="term" value="F:monoatomic cation transmembrane transporter activity"/>
    <property type="evidence" value="ECO:0007669"/>
    <property type="project" value="InterPro"/>
</dbReference>
<dbReference type="GO" id="GO:1902600">
    <property type="term" value="P:proton transmembrane transport"/>
    <property type="evidence" value="ECO:0007669"/>
    <property type="project" value="UniProtKB-KW"/>
</dbReference>
<dbReference type="GO" id="GO:0006814">
    <property type="term" value="P:sodium ion transport"/>
    <property type="evidence" value="ECO:0007669"/>
    <property type="project" value="UniProtKB-KW"/>
</dbReference>
<dbReference type="InterPro" id="IPR050622">
    <property type="entry name" value="CPA3_antiporter_subunitB"/>
</dbReference>
<dbReference type="InterPro" id="IPR005281">
    <property type="entry name" value="CPA3_sub_B"/>
</dbReference>
<dbReference type="InterPro" id="IPR007182">
    <property type="entry name" value="MnhB"/>
</dbReference>
<dbReference type="NCBIfam" id="TIGR00943">
    <property type="entry name" value="2a6301s02"/>
    <property type="match status" value="1"/>
</dbReference>
<dbReference type="NCBIfam" id="NF009223">
    <property type="entry name" value="PRK12573.1"/>
    <property type="match status" value="1"/>
</dbReference>
<dbReference type="PANTHER" id="PTHR33932">
    <property type="entry name" value="NA(+)/H(+) ANTIPORTER SUBUNIT B"/>
    <property type="match status" value="1"/>
</dbReference>
<dbReference type="PANTHER" id="PTHR33932:SF4">
    <property type="entry name" value="NA(+)_H(+) ANTIPORTER SUBUNIT B"/>
    <property type="match status" value="1"/>
</dbReference>
<dbReference type="Pfam" id="PF04039">
    <property type="entry name" value="MnhB"/>
    <property type="match status" value="1"/>
</dbReference>
<reference key="1">
    <citation type="submission" date="2007-05" db="EMBL/GenBank/DDBJ databases">
        <title>Complete sequence of chromosome of Staphylococcus aureus subsp. aureus JH9.</title>
        <authorList>
            <consortium name="US DOE Joint Genome Institute"/>
            <person name="Copeland A."/>
            <person name="Lucas S."/>
            <person name="Lapidus A."/>
            <person name="Barry K."/>
            <person name="Detter J.C."/>
            <person name="Glavina del Rio T."/>
            <person name="Hammon N."/>
            <person name="Israni S."/>
            <person name="Pitluck S."/>
            <person name="Chain P."/>
            <person name="Malfatti S."/>
            <person name="Shin M."/>
            <person name="Vergez L."/>
            <person name="Schmutz J."/>
            <person name="Larimer F."/>
            <person name="Land M."/>
            <person name="Hauser L."/>
            <person name="Kyrpides N."/>
            <person name="Kim E."/>
            <person name="Tomasz A."/>
            <person name="Richardson P."/>
        </authorList>
    </citation>
    <scope>NUCLEOTIDE SEQUENCE [LARGE SCALE GENOMIC DNA]</scope>
    <source>
        <strain>JH9</strain>
    </source>
</reference>
<evidence type="ECO:0000250" key="1"/>
<evidence type="ECO:0000255" key="2"/>
<evidence type="ECO:0000305" key="3"/>
<name>MNHB1_STAA9</name>
<sequence length="142" mass="15682">MNRQQNDLILQFAAVIIFFMVMVFGFSLFLAGHYTPGGGFVGGLLFASSLVIITIAFDIETMRKIFPLDFKILIGIGLVFCIATPIASWFLGKNFFTHVTFDIPLFILEPVHMTTAVFFDFGVLCAVVGTVMTIIISIGENE</sequence>
<keyword id="KW-0050">Antiport</keyword>
<keyword id="KW-1003">Cell membrane</keyword>
<keyword id="KW-0375">Hydrogen ion transport</keyword>
<keyword id="KW-0406">Ion transport</keyword>
<keyword id="KW-0472">Membrane</keyword>
<keyword id="KW-0915">Sodium</keyword>
<keyword id="KW-0739">Sodium transport</keyword>
<keyword id="KW-0812">Transmembrane</keyword>
<keyword id="KW-1133">Transmembrane helix</keyword>
<keyword id="KW-0813">Transport</keyword>